<feature type="chain" id="PRO_1000065650" description="Undecaprenyl-phosphate 4-deoxy-4-formamido-L-arabinose transferase">
    <location>
        <begin position="1"/>
        <end position="322"/>
    </location>
</feature>
<feature type="topological domain" description="Cytoplasmic" evidence="1">
    <location>
        <begin position="1"/>
        <end position="235"/>
    </location>
</feature>
<feature type="transmembrane region" description="Helical" evidence="1">
    <location>
        <begin position="236"/>
        <end position="256"/>
    </location>
</feature>
<feature type="topological domain" description="Periplasmic" evidence="1">
    <location>
        <begin position="257"/>
        <end position="269"/>
    </location>
</feature>
<feature type="transmembrane region" description="Helical" evidence="1">
    <location>
        <begin position="270"/>
        <end position="290"/>
    </location>
</feature>
<feature type="topological domain" description="Cytoplasmic" evidence="1">
    <location>
        <begin position="291"/>
        <end position="322"/>
    </location>
</feature>
<proteinExistence type="inferred from homology"/>
<comment type="function">
    <text evidence="1">Catalyzes the transfer of 4-deoxy-4-formamido-L-arabinose from UDP to undecaprenyl phosphate. The modified arabinose is attached to lipid A and is required for resistance to polymyxin and cationic antimicrobial peptides.</text>
</comment>
<comment type="catalytic activity">
    <reaction evidence="1">
        <text>UDP-4-deoxy-4-formamido-beta-L-arabinose + di-trans,octa-cis-undecaprenyl phosphate = 4-deoxy-4-formamido-alpha-L-arabinopyranosyl di-trans,octa-cis-undecaprenyl phosphate + UDP</text>
        <dbReference type="Rhea" id="RHEA:27722"/>
        <dbReference type="ChEBI" id="CHEBI:58223"/>
        <dbReference type="ChEBI" id="CHEBI:58709"/>
        <dbReference type="ChEBI" id="CHEBI:58909"/>
        <dbReference type="ChEBI" id="CHEBI:60392"/>
        <dbReference type="EC" id="2.4.2.53"/>
    </reaction>
</comment>
<comment type="pathway">
    <text evidence="1">Glycolipid biosynthesis; 4-amino-4-deoxy-alpha-L-arabinose undecaprenyl phosphate biosynthesis; 4-amino-4-deoxy-alpha-L-arabinose undecaprenyl phosphate from UDP-4-deoxy-4-formamido-beta-L-arabinose and undecaprenyl phosphate: step 1/2.</text>
</comment>
<comment type="pathway">
    <text evidence="1">Bacterial outer membrane biogenesis; lipopolysaccharide biosynthesis.</text>
</comment>
<comment type="subcellular location">
    <subcellularLocation>
        <location evidence="1">Cell inner membrane</location>
        <topology evidence="1">Multi-pass membrane protein</topology>
    </subcellularLocation>
</comment>
<comment type="similarity">
    <text evidence="1">Belongs to the glycosyltransferase 2 family.</text>
</comment>
<dbReference type="EC" id="2.4.2.53" evidence="1"/>
<dbReference type="EMBL" id="CP000802">
    <property type="protein sequence ID" value="ABV06675.1"/>
    <property type="molecule type" value="Genomic_DNA"/>
</dbReference>
<dbReference type="RefSeq" id="WP_000461657.1">
    <property type="nucleotide sequence ID" value="NC_009800.1"/>
</dbReference>
<dbReference type="SMR" id="A8A2C1"/>
<dbReference type="CAZy" id="GT2">
    <property type="family name" value="Glycosyltransferase Family 2"/>
</dbReference>
<dbReference type="GeneID" id="93774920"/>
<dbReference type="KEGG" id="ecx:EcHS_A2399"/>
<dbReference type="HOGENOM" id="CLU_033536_0_0_6"/>
<dbReference type="UniPathway" id="UPA00030"/>
<dbReference type="UniPathway" id="UPA00036">
    <property type="reaction ID" value="UER00495"/>
</dbReference>
<dbReference type="GO" id="GO:0005886">
    <property type="term" value="C:plasma membrane"/>
    <property type="evidence" value="ECO:0007669"/>
    <property type="project" value="UniProtKB-SubCell"/>
</dbReference>
<dbReference type="GO" id="GO:0016780">
    <property type="term" value="F:phosphotransferase activity, for other substituted phosphate groups"/>
    <property type="evidence" value="ECO:0007669"/>
    <property type="project" value="UniProtKB-UniRule"/>
</dbReference>
<dbReference type="GO" id="GO:0099621">
    <property type="term" value="F:undecaprenyl-phosphate 4-deoxy-4-formamido-L-arabinose transferase activity"/>
    <property type="evidence" value="ECO:0007669"/>
    <property type="project" value="UniProtKB-EC"/>
</dbReference>
<dbReference type="GO" id="GO:0036108">
    <property type="term" value="P:4-amino-4-deoxy-alpha-L-arabinopyranosyl undecaprenyl phosphate biosynthetic process"/>
    <property type="evidence" value="ECO:0007669"/>
    <property type="project" value="UniProtKB-UniRule"/>
</dbReference>
<dbReference type="GO" id="GO:0009245">
    <property type="term" value="P:lipid A biosynthetic process"/>
    <property type="evidence" value="ECO:0007669"/>
    <property type="project" value="UniProtKB-UniRule"/>
</dbReference>
<dbReference type="GO" id="GO:0009103">
    <property type="term" value="P:lipopolysaccharide biosynthetic process"/>
    <property type="evidence" value="ECO:0007669"/>
    <property type="project" value="UniProtKB-UniRule"/>
</dbReference>
<dbReference type="GO" id="GO:0046677">
    <property type="term" value="P:response to antibiotic"/>
    <property type="evidence" value="ECO:0007669"/>
    <property type="project" value="UniProtKB-KW"/>
</dbReference>
<dbReference type="CDD" id="cd04187">
    <property type="entry name" value="DPM1_like_bac"/>
    <property type="match status" value="1"/>
</dbReference>
<dbReference type="FunFam" id="3.90.550.10:FF:000019">
    <property type="entry name" value="Undecaprenyl-phosphate 4-deoxy-4-formamido-L-arabinose transferase"/>
    <property type="match status" value="1"/>
</dbReference>
<dbReference type="Gene3D" id="3.90.550.10">
    <property type="entry name" value="Spore Coat Polysaccharide Biosynthesis Protein SpsA, Chain A"/>
    <property type="match status" value="1"/>
</dbReference>
<dbReference type="HAMAP" id="MF_01164">
    <property type="entry name" value="ArnC_transfer"/>
    <property type="match status" value="1"/>
</dbReference>
<dbReference type="InterPro" id="IPR022857">
    <property type="entry name" value="ArnC_tfrase"/>
</dbReference>
<dbReference type="InterPro" id="IPR001173">
    <property type="entry name" value="Glyco_trans_2-like"/>
</dbReference>
<dbReference type="InterPro" id="IPR050256">
    <property type="entry name" value="Glycosyltransferase_2"/>
</dbReference>
<dbReference type="InterPro" id="IPR029044">
    <property type="entry name" value="Nucleotide-diphossugar_trans"/>
</dbReference>
<dbReference type="NCBIfam" id="NF007986">
    <property type="entry name" value="PRK10714.1"/>
    <property type="match status" value="1"/>
</dbReference>
<dbReference type="PANTHER" id="PTHR48090:SF3">
    <property type="entry name" value="UNDECAPRENYL-PHOSPHATE 4-DEOXY-4-FORMAMIDO-L-ARABINOSE TRANSFERASE"/>
    <property type="match status" value="1"/>
</dbReference>
<dbReference type="PANTHER" id="PTHR48090">
    <property type="entry name" value="UNDECAPRENYL-PHOSPHATE 4-DEOXY-4-FORMAMIDO-L-ARABINOSE TRANSFERASE-RELATED"/>
    <property type="match status" value="1"/>
</dbReference>
<dbReference type="Pfam" id="PF00535">
    <property type="entry name" value="Glycos_transf_2"/>
    <property type="match status" value="1"/>
</dbReference>
<dbReference type="SUPFAM" id="SSF53448">
    <property type="entry name" value="Nucleotide-diphospho-sugar transferases"/>
    <property type="match status" value="1"/>
</dbReference>
<name>ARNC_ECOHS</name>
<organism>
    <name type="scientific">Escherichia coli O9:H4 (strain HS)</name>
    <dbReference type="NCBI Taxonomy" id="331112"/>
    <lineage>
        <taxon>Bacteria</taxon>
        <taxon>Pseudomonadati</taxon>
        <taxon>Pseudomonadota</taxon>
        <taxon>Gammaproteobacteria</taxon>
        <taxon>Enterobacterales</taxon>
        <taxon>Enterobacteriaceae</taxon>
        <taxon>Escherichia</taxon>
    </lineage>
</organism>
<accession>A8A2C1</accession>
<protein>
    <recommendedName>
        <fullName evidence="1">Undecaprenyl-phosphate 4-deoxy-4-formamido-L-arabinose transferase</fullName>
        <ecNumber evidence="1">2.4.2.53</ecNumber>
    </recommendedName>
    <alternativeName>
        <fullName evidence="1">Undecaprenyl-phosphate Ara4FN transferase</fullName>
        <shortName evidence="1">Ara4FN transferase</shortName>
    </alternativeName>
</protein>
<reference key="1">
    <citation type="journal article" date="2008" name="J. Bacteriol.">
        <title>The pangenome structure of Escherichia coli: comparative genomic analysis of E. coli commensal and pathogenic isolates.</title>
        <authorList>
            <person name="Rasko D.A."/>
            <person name="Rosovitz M.J."/>
            <person name="Myers G.S.A."/>
            <person name="Mongodin E.F."/>
            <person name="Fricke W.F."/>
            <person name="Gajer P."/>
            <person name="Crabtree J."/>
            <person name="Sebaihia M."/>
            <person name="Thomson N.R."/>
            <person name="Chaudhuri R."/>
            <person name="Henderson I.R."/>
            <person name="Sperandio V."/>
            <person name="Ravel J."/>
        </authorList>
    </citation>
    <scope>NUCLEOTIDE SEQUENCE [LARGE SCALE GENOMIC DNA]</scope>
    <source>
        <strain>HS</strain>
    </source>
</reference>
<sequence>MFEIHPVKKVSVVIPVYNEQESLPELIRRTTTACESLGKEYEILLIDDGSSDNSAHMLVEASQAENSHIVSILLNRNYGQHSAIMAGFSHVTGDLIITLDADLQNPPEEIPRLVAKADEGYDVVGTVRQNRQDSWFRKTASKMINRLIQRTTGKAMGDYGCMLRAYRRHIVDAMLHCHERSTFIPILANIFARRAIEIPVHHAEREFGESKYSFMRLINLMYDLVTCLTTTPLRMLSLLGSIIAIGGFSIAVLLVILRLTFGPQWAAEGVFMLFAVLFTFIGAQFIGMGLLGEYIGRIYTDVRARPRYFVQQVIRPSSKENE</sequence>
<keyword id="KW-0046">Antibiotic resistance</keyword>
<keyword id="KW-0997">Cell inner membrane</keyword>
<keyword id="KW-1003">Cell membrane</keyword>
<keyword id="KW-0328">Glycosyltransferase</keyword>
<keyword id="KW-0441">Lipid A biosynthesis</keyword>
<keyword id="KW-0444">Lipid biosynthesis</keyword>
<keyword id="KW-0443">Lipid metabolism</keyword>
<keyword id="KW-0448">Lipopolysaccharide biosynthesis</keyword>
<keyword id="KW-0472">Membrane</keyword>
<keyword id="KW-0808">Transferase</keyword>
<keyword id="KW-0812">Transmembrane</keyword>
<keyword id="KW-1133">Transmembrane helix</keyword>
<gene>
    <name evidence="1" type="primary">arnC</name>
    <name type="ordered locus">EcHS_A2399</name>
</gene>
<evidence type="ECO:0000255" key="1">
    <source>
        <dbReference type="HAMAP-Rule" id="MF_01164"/>
    </source>
</evidence>